<reference key="1">
    <citation type="journal article" date="2006" name="J. Bacteriol.">
        <title>The genome of the obligately intracellular bacterium Ehrlichia canis reveals themes of complex membrane structure and immune evasion strategies.</title>
        <authorList>
            <person name="Mavromatis K."/>
            <person name="Doyle C.K."/>
            <person name="Lykidis A."/>
            <person name="Ivanova N."/>
            <person name="Francino M.P."/>
            <person name="Chain P."/>
            <person name="Shin M."/>
            <person name="Malfatti S."/>
            <person name="Larimer F."/>
            <person name="Copeland A."/>
            <person name="Detter J.C."/>
            <person name="Land M."/>
            <person name="Richardson P.M."/>
            <person name="Yu X.J."/>
            <person name="Walker D.H."/>
            <person name="McBride J.W."/>
            <person name="Kyrpides N.C."/>
        </authorList>
    </citation>
    <scope>NUCLEOTIDE SEQUENCE [LARGE SCALE GENOMIC DNA]</scope>
    <source>
        <strain>Jake</strain>
    </source>
</reference>
<gene>
    <name evidence="1" type="primary">rpsH</name>
    <name type="ordered locus">Ecaj_0598</name>
</gene>
<keyword id="KW-0687">Ribonucleoprotein</keyword>
<keyword id="KW-0689">Ribosomal protein</keyword>
<keyword id="KW-0694">RNA-binding</keyword>
<keyword id="KW-0699">rRNA-binding</keyword>
<proteinExistence type="inferred from homology"/>
<name>RS8_EHRCJ</name>
<accession>Q3YRM3</accession>
<evidence type="ECO:0000255" key="1">
    <source>
        <dbReference type="HAMAP-Rule" id="MF_01302"/>
    </source>
</evidence>
<evidence type="ECO:0000305" key="2"/>
<comment type="function">
    <text evidence="1">One of the primary rRNA binding proteins, it binds directly to 16S rRNA central domain where it helps coordinate assembly of the platform of the 30S subunit.</text>
</comment>
<comment type="subunit">
    <text evidence="1">Part of the 30S ribosomal subunit. Contacts proteins S5 and S12.</text>
</comment>
<comment type="similarity">
    <text evidence="1">Belongs to the universal ribosomal protein uS8 family.</text>
</comment>
<protein>
    <recommendedName>
        <fullName evidence="1">Small ribosomal subunit protein uS8</fullName>
    </recommendedName>
    <alternativeName>
        <fullName evidence="2">30S ribosomal protein S8</fullName>
    </alternativeName>
</protein>
<dbReference type="EMBL" id="CP000107">
    <property type="protein sequence ID" value="AAZ68632.1"/>
    <property type="molecule type" value="Genomic_DNA"/>
</dbReference>
<dbReference type="RefSeq" id="WP_011304710.1">
    <property type="nucleotide sequence ID" value="NC_007354.1"/>
</dbReference>
<dbReference type="SMR" id="Q3YRM3"/>
<dbReference type="FunCoup" id="Q3YRM3">
    <property type="interactions" value="315"/>
</dbReference>
<dbReference type="STRING" id="269484.Ecaj_0598"/>
<dbReference type="KEGG" id="ecn:Ecaj_0598"/>
<dbReference type="eggNOG" id="COG0096">
    <property type="taxonomic scope" value="Bacteria"/>
</dbReference>
<dbReference type="HOGENOM" id="CLU_098428_0_0_5"/>
<dbReference type="InParanoid" id="Q3YRM3"/>
<dbReference type="Proteomes" id="UP000000435">
    <property type="component" value="Chromosome"/>
</dbReference>
<dbReference type="GO" id="GO:1990904">
    <property type="term" value="C:ribonucleoprotein complex"/>
    <property type="evidence" value="ECO:0007669"/>
    <property type="project" value="UniProtKB-KW"/>
</dbReference>
<dbReference type="GO" id="GO:0005840">
    <property type="term" value="C:ribosome"/>
    <property type="evidence" value="ECO:0007669"/>
    <property type="project" value="UniProtKB-KW"/>
</dbReference>
<dbReference type="GO" id="GO:0019843">
    <property type="term" value="F:rRNA binding"/>
    <property type="evidence" value="ECO:0007669"/>
    <property type="project" value="UniProtKB-UniRule"/>
</dbReference>
<dbReference type="GO" id="GO:0003735">
    <property type="term" value="F:structural constituent of ribosome"/>
    <property type="evidence" value="ECO:0007669"/>
    <property type="project" value="InterPro"/>
</dbReference>
<dbReference type="GO" id="GO:0006412">
    <property type="term" value="P:translation"/>
    <property type="evidence" value="ECO:0007669"/>
    <property type="project" value="UniProtKB-UniRule"/>
</dbReference>
<dbReference type="FunFam" id="3.30.1490.10:FF:000001">
    <property type="entry name" value="30S ribosomal protein S8"/>
    <property type="match status" value="1"/>
</dbReference>
<dbReference type="Gene3D" id="3.30.1370.30">
    <property type="match status" value="1"/>
</dbReference>
<dbReference type="Gene3D" id="3.30.1490.10">
    <property type="match status" value="1"/>
</dbReference>
<dbReference type="HAMAP" id="MF_01302_B">
    <property type="entry name" value="Ribosomal_uS8_B"/>
    <property type="match status" value="1"/>
</dbReference>
<dbReference type="InterPro" id="IPR000630">
    <property type="entry name" value="Ribosomal_uS8"/>
</dbReference>
<dbReference type="InterPro" id="IPR047863">
    <property type="entry name" value="Ribosomal_uS8_CS"/>
</dbReference>
<dbReference type="InterPro" id="IPR035987">
    <property type="entry name" value="Ribosomal_uS8_sf"/>
</dbReference>
<dbReference type="NCBIfam" id="NF001109">
    <property type="entry name" value="PRK00136.1"/>
    <property type="match status" value="1"/>
</dbReference>
<dbReference type="PANTHER" id="PTHR11758">
    <property type="entry name" value="40S RIBOSOMAL PROTEIN S15A"/>
    <property type="match status" value="1"/>
</dbReference>
<dbReference type="Pfam" id="PF00410">
    <property type="entry name" value="Ribosomal_S8"/>
    <property type="match status" value="1"/>
</dbReference>
<dbReference type="SUPFAM" id="SSF56047">
    <property type="entry name" value="Ribosomal protein S8"/>
    <property type="match status" value="1"/>
</dbReference>
<dbReference type="PROSITE" id="PS00053">
    <property type="entry name" value="RIBOSOMAL_S8"/>
    <property type="match status" value="1"/>
</dbReference>
<feature type="chain" id="PRO_0000290830" description="Small ribosomal subunit protein uS8">
    <location>
        <begin position="1"/>
        <end position="132"/>
    </location>
</feature>
<organism>
    <name type="scientific">Ehrlichia canis (strain Jake)</name>
    <dbReference type="NCBI Taxonomy" id="269484"/>
    <lineage>
        <taxon>Bacteria</taxon>
        <taxon>Pseudomonadati</taxon>
        <taxon>Pseudomonadota</taxon>
        <taxon>Alphaproteobacteria</taxon>
        <taxon>Rickettsiales</taxon>
        <taxon>Anaplasmataceae</taxon>
        <taxon>Ehrlichia</taxon>
    </lineage>
</organism>
<sequence>MSLSDPIANFLTSIRNGQLSMNKVIVVSYSYVIHAILQILLSEGYIDGFTEKSKSSSIKFFEVKLKYYNGAPVISQIARISKPGKRCYCSAKDMPKFYNGLGLYIISTSKGIMSDYNARKAGVGGEILCGVF</sequence>